<keyword id="KW-0227">DNA damage</keyword>
<keyword id="KW-0234">DNA repair</keyword>
<comment type="function">
    <text evidence="1">This protein is involved in the repair of mismatches in DNA. It is required for dam-dependent methyl-directed DNA mismatch repair. May act as a 'molecular matchmaker', a protein that promotes the formation of a stable complex between two or more DNA-binding proteins in an ATP-dependent manner without itself being part of a final effector complex.</text>
</comment>
<comment type="similarity">
    <text evidence="1">Belongs to the DNA mismatch repair MutL/HexB family.</text>
</comment>
<accession>Q256F3</accession>
<reference key="1">
    <citation type="journal article" date="2006" name="DNA Res.">
        <title>Genome sequence of the cat pathogen, Chlamydophila felis.</title>
        <authorList>
            <person name="Azuma Y."/>
            <person name="Hirakawa H."/>
            <person name="Yamashita A."/>
            <person name="Cai Y."/>
            <person name="Rahman M.A."/>
            <person name="Suzuki H."/>
            <person name="Mitaku S."/>
            <person name="Toh H."/>
            <person name="Goto S."/>
            <person name="Murakami T."/>
            <person name="Sugi K."/>
            <person name="Hayashi H."/>
            <person name="Fukushi H."/>
            <person name="Hattori M."/>
            <person name="Kuhara S."/>
            <person name="Shirai M."/>
        </authorList>
    </citation>
    <scope>NUCLEOTIDE SEQUENCE [LARGE SCALE GENOMIC DNA]</scope>
    <source>
        <strain>Fe/C-56</strain>
    </source>
</reference>
<feature type="chain" id="PRO_1000096635" description="DNA mismatch repair protein MutL">
    <location>
        <begin position="1"/>
        <end position="580"/>
    </location>
</feature>
<proteinExistence type="inferred from homology"/>
<organism>
    <name type="scientific">Chlamydia felis (strain Fe/C-56)</name>
    <name type="common">Chlamydophila felis</name>
    <dbReference type="NCBI Taxonomy" id="264202"/>
    <lineage>
        <taxon>Bacteria</taxon>
        <taxon>Pseudomonadati</taxon>
        <taxon>Chlamydiota</taxon>
        <taxon>Chlamydiia</taxon>
        <taxon>Chlamydiales</taxon>
        <taxon>Chlamydiaceae</taxon>
        <taxon>Chlamydia/Chlamydophila group</taxon>
        <taxon>Chlamydia</taxon>
    </lineage>
</organism>
<evidence type="ECO:0000255" key="1">
    <source>
        <dbReference type="HAMAP-Rule" id="MF_00149"/>
    </source>
</evidence>
<protein>
    <recommendedName>
        <fullName evidence="1">DNA mismatch repair protein MutL</fullName>
    </recommendedName>
</protein>
<gene>
    <name evidence="1" type="primary">mutL</name>
    <name type="ordered locus">CF0063</name>
</gene>
<name>MUTL_CHLFF</name>
<dbReference type="EMBL" id="AP006861">
    <property type="protein sequence ID" value="BAE80835.1"/>
    <property type="molecule type" value="Genomic_DNA"/>
</dbReference>
<dbReference type="RefSeq" id="WP_011457620.1">
    <property type="nucleotide sequence ID" value="NC_007899.1"/>
</dbReference>
<dbReference type="SMR" id="Q256F3"/>
<dbReference type="STRING" id="264202.CF0063"/>
<dbReference type="KEGG" id="cfe:CF0063"/>
<dbReference type="eggNOG" id="COG0323">
    <property type="taxonomic scope" value="Bacteria"/>
</dbReference>
<dbReference type="HOGENOM" id="CLU_004131_4_3_0"/>
<dbReference type="OrthoDB" id="9763467at2"/>
<dbReference type="Proteomes" id="UP000001260">
    <property type="component" value="Chromosome"/>
</dbReference>
<dbReference type="GO" id="GO:0032300">
    <property type="term" value="C:mismatch repair complex"/>
    <property type="evidence" value="ECO:0007669"/>
    <property type="project" value="InterPro"/>
</dbReference>
<dbReference type="GO" id="GO:0005524">
    <property type="term" value="F:ATP binding"/>
    <property type="evidence" value="ECO:0007669"/>
    <property type="project" value="InterPro"/>
</dbReference>
<dbReference type="GO" id="GO:0016887">
    <property type="term" value="F:ATP hydrolysis activity"/>
    <property type="evidence" value="ECO:0007669"/>
    <property type="project" value="InterPro"/>
</dbReference>
<dbReference type="GO" id="GO:0140664">
    <property type="term" value="F:ATP-dependent DNA damage sensor activity"/>
    <property type="evidence" value="ECO:0007669"/>
    <property type="project" value="InterPro"/>
</dbReference>
<dbReference type="GO" id="GO:0030983">
    <property type="term" value="F:mismatched DNA binding"/>
    <property type="evidence" value="ECO:0007669"/>
    <property type="project" value="InterPro"/>
</dbReference>
<dbReference type="GO" id="GO:0006298">
    <property type="term" value="P:mismatch repair"/>
    <property type="evidence" value="ECO:0007669"/>
    <property type="project" value="UniProtKB-UniRule"/>
</dbReference>
<dbReference type="CDD" id="cd16926">
    <property type="entry name" value="HATPase_MutL-MLH-PMS-like"/>
    <property type="match status" value="1"/>
</dbReference>
<dbReference type="CDD" id="cd00782">
    <property type="entry name" value="MutL_Trans"/>
    <property type="match status" value="1"/>
</dbReference>
<dbReference type="FunFam" id="3.30.565.10:FF:000003">
    <property type="entry name" value="DNA mismatch repair endonuclease MutL"/>
    <property type="match status" value="1"/>
</dbReference>
<dbReference type="Gene3D" id="3.30.230.10">
    <property type="match status" value="1"/>
</dbReference>
<dbReference type="Gene3D" id="3.30.565.10">
    <property type="entry name" value="Histidine kinase-like ATPase, C-terminal domain"/>
    <property type="match status" value="1"/>
</dbReference>
<dbReference type="Gene3D" id="3.30.1540.20">
    <property type="entry name" value="MutL, C-terminal domain, dimerisation subdomain"/>
    <property type="match status" value="1"/>
</dbReference>
<dbReference type="Gene3D" id="3.30.1370.100">
    <property type="entry name" value="MutL, C-terminal domain, regulatory subdomain"/>
    <property type="match status" value="1"/>
</dbReference>
<dbReference type="HAMAP" id="MF_00149">
    <property type="entry name" value="DNA_mis_repair"/>
    <property type="match status" value="1"/>
</dbReference>
<dbReference type="InterPro" id="IPR014762">
    <property type="entry name" value="DNA_mismatch_repair_CS"/>
</dbReference>
<dbReference type="InterPro" id="IPR020667">
    <property type="entry name" value="DNA_mismatch_repair_MutL"/>
</dbReference>
<dbReference type="InterPro" id="IPR013507">
    <property type="entry name" value="DNA_mismatch_S5_2-like"/>
</dbReference>
<dbReference type="InterPro" id="IPR036890">
    <property type="entry name" value="HATPase_C_sf"/>
</dbReference>
<dbReference type="InterPro" id="IPR002099">
    <property type="entry name" value="MutL/Mlh/PMS"/>
</dbReference>
<dbReference type="InterPro" id="IPR038973">
    <property type="entry name" value="MutL/Mlh/Pms-like"/>
</dbReference>
<dbReference type="InterPro" id="IPR014790">
    <property type="entry name" value="MutL_C"/>
</dbReference>
<dbReference type="InterPro" id="IPR042120">
    <property type="entry name" value="MutL_C_dimsub"/>
</dbReference>
<dbReference type="InterPro" id="IPR042121">
    <property type="entry name" value="MutL_C_regsub"/>
</dbReference>
<dbReference type="InterPro" id="IPR037198">
    <property type="entry name" value="MutL_C_sf"/>
</dbReference>
<dbReference type="InterPro" id="IPR020568">
    <property type="entry name" value="Ribosomal_Su5_D2-typ_SF"/>
</dbReference>
<dbReference type="InterPro" id="IPR014721">
    <property type="entry name" value="Ribsml_uS5_D2-typ_fold_subgr"/>
</dbReference>
<dbReference type="NCBIfam" id="TIGR00585">
    <property type="entry name" value="mutl"/>
    <property type="match status" value="1"/>
</dbReference>
<dbReference type="NCBIfam" id="NF000954">
    <property type="entry name" value="PRK00095.2-5"/>
    <property type="match status" value="1"/>
</dbReference>
<dbReference type="PANTHER" id="PTHR10073">
    <property type="entry name" value="DNA MISMATCH REPAIR PROTEIN MLH, PMS, MUTL"/>
    <property type="match status" value="1"/>
</dbReference>
<dbReference type="PANTHER" id="PTHR10073:SF12">
    <property type="entry name" value="DNA MISMATCH REPAIR PROTEIN MLH1"/>
    <property type="match status" value="1"/>
</dbReference>
<dbReference type="Pfam" id="PF01119">
    <property type="entry name" value="DNA_mis_repair"/>
    <property type="match status" value="1"/>
</dbReference>
<dbReference type="Pfam" id="PF13589">
    <property type="entry name" value="HATPase_c_3"/>
    <property type="match status" value="1"/>
</dbReference>
<dbReference type="Pfam" id="PF08676">
    <property type="entry name" value="MutL_C"/>
    <property type="match status" value="1"/>
</dbReference>
<dbReference type="SMART" id="SM01340">
    <property type="entry name" value="DNA_mis_repair"/>
    <property type="match status" value="1"/>
</dbReference>
<dbReference type="SMART" id="SM00853">
    <property type="entry name" value="MutL_C"/>
    <property type="match status" value="1"/>
</dbReference>
<dbReference type="SUPFAM" id="SSF55874">
    <property type="entry name" value="ATPase domain of HSP90 chaperone/DNA topoisomerase II/histidine kinase"/>
    <property type="match status" value="1"/>
</dbReference>
<dbReference type="SUPFAM" id="SSF118116">
    <property type="entry name" value="DNA mismatch repair protein MutL"/>
    <property type="match status" value="1"/>
</dbReference>
<dbReference type="SUPFAM" id="SSF54211">
    <property type="entry name" value="Ribosomal protein S5 domain 2-like"/>
    <property type="match status" value="1"/>
</dbReference>
<dbReference type="PROSITE" id="PS00058">
    <property type="entry name" value="DNA_MISMATCH_REPAIR_1"/>
    <property type="match status" value="1"/>
</dbReference>
<sequence length="580" mass="64797">MPSRPLIQLLDTTTINQIAAGEVIENSISVVKELVENALDAGADEIEVETLGGGQGLIVVKDNGCGMSAEDVTLALKRHATSKIGEFSDIFSLSSFGFRGEALPAIASISKMEILSCPRIGEGSRTIIHGGEIIASEAKPRQLGTTISIDSLFYNVPVRRGFQKSPQADRIAMRKLLENRILSIEGVGWSWVSERQQEFHILKHRGFAERVGFVMGEGFMQEALRVDSGERPVCVRGFLGSPGFHRPTRSGQRVFINDRPVDSVFISKQIREAYSMLLPPQRHPVFVLKLYLPPEWCDFNVHPQKTEVRILKEEFVGEFLSESIGEVLARPQESSVSEKTIFSLPALRFFDEHLAERSSVEPLESISLPELSIPPKVPLPFLDKGQDIPTTDGQMQIDWGVSQEVRFLTSLGKIVLAEDSEGVHAIFTEAARKHLFYLALTENQQYNYKSQSFLVPLCLEVTPQEGIFLSSHVEDFKQLGIELSQMGPCIFAIDSAPTFIGEEELKSWILFLAAESHAKVDRKAVALLIKETLTQTVFCKTLRPFDISWLSLLWQIGKPEKAFDGTQIRRLVLDEDFIKE</sequence>